<feature type="chain" id="PRO_1000195145" description="Holliday junction branch migration complex subunit RuvA">
    <location>
        <begin position="1"/>
        <end position="203"/>
    </location>
</feature>
<feature type="region of interest" description="Domain I" evidence="1">
    <location>
        <begin position="1"/>
        <end position="64"/>
    </location>
</feature>
<feature type="region of interest" description="Domain II" evidence="1">
    <location>
        <begin position="65"/>
        <end position="142"/>
    </location>
</feature>
<feature type="region of interest" description="Flexible linker" evidence="1">
    <location>
        <begin position="143"/>
        <end position="154"/>
    </location>
</feature>
<feature type="region of interest" description="Domain III" evidence="1">
    <location>
        <begin position="155"/>
        <end position="203"/>
    </location>
</feature>
<sequence length="203" mass="22086">MIGRLRGIIIEKQPPLVLIEVGGVGYEVHMPMTCFYELPEAGQEAIVFTHFVVREDAQLLYGFNNKQERTLFKELIKTNGVGPKLALAILSGMSAQQFVNAVEREEVGALVKLPGIGKKTAERLIVEMKDRFKGLHGDLFTPAADLVLTSPASPATDDAEQEAVAALVALGYKPQEASRMVSKIARPDASSETLIREALRAAL</sequence>
<proteinExistence type="inferred from homology"/>
<dbReference type="EMBL" id="CU928160">
    <property type="protein sequence ID" value="CAQ98801.1"/>
    <property type="molecule type" value="Genomic_DNA"/>
</dbReference>
<dbReference type="RefSeq" id="WP_000580323.1">
    <property type="nucleotide sequence ID" value="NC_011741.1"/>
</dbReference>
<dbReference type="SMR" id="B7M2F2"/>
<dbReference type="GeneID" id="75057740"/>
<dbReference type="KEGG" id="ecr:ECIAI1_1948"/>
<dbReference type="HOGENOM" id="CLU_087936_0_0_6"/>
<dbReference type="GO" id="GO:0005737">
    <property type="term" value="C:cytoplasm"/>
    <property type="evidence" value="ECO:0007669"/>
    <property type="project" value="UniProtKB-SubCell"/>
</dbReference>
<dbReference type="GO" id="GO:0009379">
    <property type="term" value="C:Holliday junction helicase complex"/>
    <property type="evidence" value="ECO:0007669"/>
    <property type="project" value="InterPro"/>
</dbReference>
<dbReference type="GO" id="GO:0048476">
    <property type="term" value="C:Holliday junction resolvase complex"/>
    <property type="evidence" value="ECO:0007669"/>
    <property type="project" value="UniProtKB-UniRule"/>
</dbReference>
<dbReference type="GO" id="GO:0005524">
    <property type="term" value="F:ATP binding"/>
    <property type="evidence" value="ECO:0007669"/>
    <property type="project" value="InterPro"/>
</dbReference>
<dbReference type="GO" id="GO:0000400">
    <property type="term" value="F:four-way junction DNA binding"/>
    <property type="evidence" value="ECO:0007669"/>
    <property type="project" value="UniProtKB-UniRule"/>
</dbReference>
<dbReference type="GO" id="GO:0009378">
    <property type="term" value="F:four-way junction helicase activity"/>
    <property type="evidence" value="ECO:0007669"/>
    <property type="project" value="InterPro"/>
</dbReference>
<dbReference type="GO" id="GO:0006310">
    <property type="term" value="P:DNA recombination"/>
    <property type="evidence" value="ECO:0007669"/>
    <property type="project" value="UniProtKB-UniRule"/>
</dbReference>
<dbReference type="GO" id="GO:0006281">
    <property type="term" value="P:DNA repair"/>
    <property type="evidence" value="ECO:0007669"/>
    <property type="project" value="UniProtKB-UniRule"/>
</dbReference>
<dbReference type="GO" id="GO:0009432">
    <property type="term" value="P:SOS response"/>
    <property type="evidence" value="ECO:0007669"/>
    <property type="project" value="UniProtKB-UniRule"/>
</dbReference>
<dbReference type="CDD" id="cd14332">
    <property type="entry name" value="UBA_RuvA_C"/>
    <property type="match status" value="1"/>
</dbReference>
<dbReference type="FunFam" id="1.10.150.20:FF:000012">
    <property type="entry name" value="Holliday junction ATP-dependent DNA helicase RuvA"/>
    <property type="match status" value="1"/>
</dbReference>
<dbReference type="FunFam" id="1.10.8.10:FF:000008">
    <property type="entry name" value="Holliday junction ATP-dependent DNA helicase RuvA"/>
    <property type="match status" value="1"/>
</dbReference>
<dbReference type="FunFam" id="2.40.50.140:FF:000083">
    <property type="entry name" value="Holliday junction ATP-dependent DNA helicase RuvA"/>
    <property type="match status" value="1"/>
</dbReference>
<dbReference type="Gene3D" id="1.10.150.20">
    <property type="entry name" value="5' to 3' exonuclease, C-terminal subdomain"/>
    <property type="match status" value="1"/>
</dbReference>
<dbReference type="Gene3D" id="1.10.8.10">
    <property type="entry name" value="DNA helicase RuvA subunit, C-terminal domain"/>
    <property type="match status" value="1"/>
</dbReference>
<dbReference type="Gene3D" id="2.40.50.140">
    <property type="entry name" value="Nucleic acid-binding proteins"/>
    <property type="match status" value="1"/>
</dbReference>
<dbReference type="HAMAP" id="MF_00031">
    <property type="entry name" value="DNA_HJ_migration_RuvA"/>
    <property type="match status" value="1"/>
</dbReference>
<dbReference type="InterPro" id="IPR013849">
    <property type="entry name" value="DNA_helicase_Holl-junc_RuvA_I"/>
</dbReference>
<dbReference type="InterPro" id="IPR003583">
    <property type="entry name" value="Hlx-hairpin-Hlx_DNA-bd_motif"/>
</dbReference>
<dbReference type="InterPro" id="IPR012340">
    <property type="entry name" value="NA-bd_OB-fold"/>
</dbReference>
<dbReference type="InterPro" id="IPR000085">
    <property type="entry name" value="RuvA"/>
</dbReference>
<dbReference type="InterPro" id="IPR010994">
    <property type="entry name" value="RuvA_2-like"/>
</dbReference>
<dbReference type="InterPro" id="IPR011114">
    <property type="entry name" value="RuvA_C"/>
</dbReference>
<dbReference type="InterPro" id="IPR036267">
    <property type="entry name" value="RuvA_C_sf"/>
</dbReference>
<dbReference type="NCBIfam" id="TIGR00084">
    <property type="entry name" value="ruvA"/>
    <property type="match status" value="1"/>
</dbReference>
<dbReference type="Pfam" id="PF14520">
    <property type="entry name" value="HHH_5"/>
    <property type="match status" value="1"/>
</dbReference>
<dbReference type="Pfam" id="PF07499">
    <property type="entry name" value="RuvA_C"/>
    <property type="match status" value="1"/>
</dbReference>
<dbReference type="Pfam" id="PF01330">
    <property type="entry name" value="RuvA_N"/>
    <property type="match status" value="1"/>
</dbReference>
<dbReference type="SMART" id="SM00278">
    <property type="entry name" value="HhH1"/>
    <property type="match status" value="2"/>
</dbReference>
<dbReference type="SUPFAM" id="SSF46929">
    <property type="entry name" value="DNA helicase RuvA subunit, C-terminal domain"/>
    <property type="match status" value="1"/>
</dbReference>
<dbReference type="SUPFAM" id="SSF50249">
    <property type="entry name" value="Nucleic acid-binding proteins"/>
    <property type="match status" value="1"/>
</dbReference>
<dbReference type="SUPFAM" id="SSF47781">
    <property type="entry name" value="RuvA domain 2-like"/>
    <property type="match status" value="1"/>
</dbReference>
<organism>
    <name type="scientific">Escherichia coli O8 (strain IAI1)</name>
    <dbReference type="NCBI Taxonomy" id="585034"/>
    <lineage>
        <taxon>Bacteria</taxon>
        <taxon>Pseudomonadati</taxon>
        <taxon>Pseudomonadota</taxon>
        <taxon>Gammaproteobacteria</taxon>
        <taxon>Enterobacterales</taxon>
        <taxon>Enterobacteriaceae</taxon>
        <taxon>Escherichia</taxon>
    </lineage>
</organism>
<comment type="function">
    <text evidence="1">The RuvA-RuvB-RuvC complex processes Holliday junction (HJ) DNA during genetic recombination and DNA repair, while the RuvA-RuvB complex plays an important role in the rescue of blocked DNA replication forks via replication fork reversal (RFR). RuvA specifically binds to HJ cruciform DNA, conferring on it an open structure. The RuvB hexamer acts as an ATP-dependent pump, pulling dsDNA into and through the RuvAB complex. HJ branch migration allows RuvC to scan DNA until it finds its consensus sequence, where it cleaves and resolves the cruciform DNA.</text>
</comment>
<comment type="subunit">
    <text evidence="1">Homotetramer. Forms an RuvA(8)-RuvB(12)-Holliday junction (HJ) complex. HJ DNA is sandwiched between 2 RuvA tetramers; dsDNA enters through RuvA and exits via RuvB. An RuvB hexamer assembles on each DNA strand where it exits the tetramer. Each RuvB hexamer is contacted by two RuvA subunits (via domain III) on 2 adjacent RuvB subunits; this complex drives branch migration. In the full resolvosome a probable DNA-RuvA(4)-RuvB(12)-RuvC(2) complex forms which resolves the HJ.</text>
</comment>
<comment type="subcellular location">
    <subcellularLocation>
        <location evidence="1">Cytoplasm</location>
    </subcellularLocation>
</comment>
<comment type="domain">
    <text evidence="1">Has three domains with a flexible linker between the domains II and III and assumes an 'L' shape. Domain III is highly mobile and contacts RuvB.</text>
</comment>
<comment type="similarity">
    <text evidence="1">Belongs to the RuvA family.</text>
</comment>
<evidence type="ECO:0000255" key="1">
    <source>
        <dbReference type="HAMAP-Rule" id="MF_00031"/>
    </source>
</evidence>
<accession>B7M2F2</accession>
<gene>
    <name evidence="1" type="primary">ruvA</name>
    <name type="ordered locus">ECIAI1_1948</name>
</gene>
<reference key="1">
    <citation type="journal article" date="2009" name="PLoS Genet.">
        <title>Organised genome dynamics in the Escherichia coli species results in highly diverse adaptive paths.</title>
        <authorList>
            <person name="Touchon M."/>
            <person name="Hoede C."/>
            <person name="Tenaillon O."/>
            <person name="Barbe V."/>
            <person name="Baeriswyl S."/>
            <person name="Bidet P."/>
            <person name="Bingen E."/>
            <person name="Bonacorsi S."/>
            <person name="Bouchier C."/>
            <person name="Bouvet O."/>
            <person name="Calteau A."/>
            <person name="Chiapello H."/>
            <person name="Clermont O."/>
            <person name="Cruveiller S."/>
            <person name="Danchin A."/>
            <person name="Diard M."/>
            <person name="Dossat C."/>
            <person name="Karoui M.E."/>
            <person name="Frapy E."/>
            <person name="Garry L."/>
            <person name="Ghigo J.M."/>
            <person name="Gilles A.M."/>
            <person name="Johnson J."/>
            <person name="Le Bouguenec C."/>
            <person name="Lescat M."/>
            <person name="Mangenot S."/>
            <person name="Martinez-Jehanne V."/>
            <person name="Matic I."/>
            <person name="Nassif X."/>
            <person name="Oztas S."/>
            <person name="Petit M.A."/>
            <person name="Pichon C."/>
            <person name="Rouy Z."/>
            <person name="Ruf C.S."/>
            <person name="Schneider D."/>
            <person name="Tourret J."/>
            <person name="Vacherie B."/>
            <person name="Vallenet D."/>
            <person name="Medigue C."/>
            <person name="Rocha E.P.C."/>
            <person name="Denamur E."/>
        </authorList>
    </citation>
    <scope>NUCLEOTIDE SEQUENCE [LARGE SCALE GENOMIC DNA]</scope>
    <source>
        <strain>IAI1</strain>
    </source>
</reference>
<keyword id="KW-0963">Cytoplasm</keyword>
<keyword id="KW-0227">DNA damage</keyword>
<keyword id="KW-0233">DNA recombination</keyword>
<keyword id="KW-0234">DNA repair</keyword>
<keyword id="KW-0238">DNA-binding</keyword>
<keyword id="KW-0742">SOS response</keyword>
<protein>
    <recommendedName>
        <fullName evidence="1">Holliday junction branch migration complex subunit RuvA</fullName>
    </recommendedName>
</protein>
<name>RUVA_ECO8A</name>